<protein>
    <recommendedName>
        <fullName>Protein ATP1B4</fullName>
    </recommendedName>
    <alternativeName>
        <fullName>X,K-ATPase subunit beta-m</fullName>
    </alternativeName>
    <alternativeName>
        <fullName>X/potassium-transporting ATPase subunit beta-m</fullName>
    </alternativeName>
</protein>
<proteinExistence type="evidence at protein level"/>
<gene>
    <name type="primary">atp1b4</name>
</gene>
<accession>Q202B1</accession>
<evidence type="ECO:0000250" key="1"/>
<evidence type="ECO:0000255" key="2"/>
<evidence type="ECO:0000256" key="3">
    <source>
        <dbReference type="SAM" id="MobiDB-lite"/>
    </source>
</evidence>
<evidence type="ECO:0000269" key="4">
    <source>
    </source>
</evidence>
<evidence type="ECO:0000305" key="5"/>
<feature type="chain" id="PRO_0000393965" description="Protein ATP1B4">
    <location>
        <begin position="1"/>
        <end position="314"/>
    </location>
</feature>
<feature type="topological domain" description="Cytoplasmic" evidence="2">
    <location>
        <begin position="1"/>
        <end position="69"/>
    </location>
</feature>
<feature type="transmembrane region" description="Helical" evidence="2">
    <location>
        <begin position="70"/>
        <end position="90"/>
    </location>
</feature>
<feature type="topological domain" description="Extracellular" evidence="2">
    <location>
        <begin position="91"/>
        <end position="314"/>
    </location>
</feature>
<feature type="region of interest" description="Disordered" evidence="3">
    <location>
        <begin position="1"/>
        <end position="37"/>
    </location>
</feature>
<feature type="compositionally biased region" description="Polar residues" evidence="3">
    <location>
        <begin position="1"/>
        <end position="17"/>
    </location>
</feature>
<feature type="compositionally biased region" description="Basic and acidic residues" evidence="3">
    <location>
        <begin position="19"/>
        <end position="37"/>
    </location>
</feature>
<feature type="glycosylation site" description="N-linked (GlcNAc...) asparagine" evidence="2">
    <location>
        <position position="188"/>
    </location>
</feature>
<feature type="glycosylation site" description="N-linked (GlcNAc...) asparagine" evidence="2">
    <location>
        <position position="264"/>
    </location>
</feature>
<feature type="disulfide bond" evidence="1">
    <location>
        <begin position="160"/>
        <end position="179"/>
    </location>
</feature>
<feature type="disulfide bond" evidence="1">
    <location>
        <begin position="189"/>
        <end position="205"/>
    </location>
</feature>
<feature type="disulfide bond" evidence="1">
    <location>
        <begin position="228"/>
        <end position="287"/>
    </location>
</feature>
<organism>
    <name type="scientific">Xenopus laevis</name>
    <name type="common">African clawed frog</name>
    <dbReference type="NCBI Taxonomy" id="8355"/>
    <lineage>
        <taxon>Eukaryota</taxon>
        <taxon>Metazoa</taxon>
        <taxon>Chordata</taxon>
        <taxon>Craniata</taxon>
        <taxon>Vertebrata</taxon>
        <taxon>Euteleostomi</taxon>
        <taxon>Amphibia</taxon>
        <taxon>Batrachia</taxon>
        <taxon>Anura</taxon>
        <taxon>Pipoidea</taxon>
        <taxon>Pipidae</taxon>
        <taxon>Xenopodinae</taxon>
        <taxon>Xenopus</taxon>
        <taxon>Xenopus</taxon>
    </lineage>
</organism>
<name>AT1B4_XENLA</name>
<dbReference type="EMBL" id="DQ413025">
    <property type="protein sequence ID" value="ABD72588.1"/>
    <property type="molecule type" value="mRNA"/>
</dbReference>
<dbReference type="EMBL" id="BC170017">
    <property type="protein sequence ID" value="AAI70017.1"/>
    <property type="molecule type" value="mRNA"/>
</dbReference>
<dbReference type="EMBL" id="BC170019">
    <property type="protein sequence ID" value="AAI70019.1"/>
    <property type="molecule type" value="mRNA"/>
</dbReference>
<dbReference type="RefSeq" id="NP_001089970.1">
    <property type="nucleotide sequence ID" value="NM_001096501.1"/>
</dbReference>
<dbReference type="RefSeq" id="XP_018084746.1">
    <property type="nucleotide sequence ID" value="XM_018229257.1"/>
</dbReference>
<dbReference type="SMR" id="Q202B1"/>
<dbReference type="GlyCosmos" id="Q202B1">
    <property type="glycosylation" value="2 sites, No reported glycans"/>
</dbReference>
<dbReference type="GeneID" id="735041"/>
<dbReference type="KEGG" id="xla:735041"/>
<dbReference type="AGR" id="Xenbase:XB-GENE-975980"/>
<dbReference type="CTD" id="735041"/>
<dbReference type="Xenbase" id="XB-GENE-975980">
    <property type="gene designation" value="atp1b4.L"/>
</dbReference>
<dbReference type="OMA" id="FGGCMFC"/>
<dbReference type="OrthoDB" id="5912413at2759"/>
<dbReference type="Proteomes" id="UP000186698">
    <property type="component" value="Chromosome 8L"/>
</dbReference>
<dbReference type="Bgee" id="735041">
    <property type="expression patterns" value="Expressed in muscle tissue and 4 other cell types or tissues"/>
</dbReference>
<dbReference type="GO" id="GO:0005637">
    <property type="term" value="C:nuclear inner membrane"/>
    <property type="evidence" value="ECO:0000318"/>
    <property type="project" value="GO_Central"/>
</dbReference>
<dbReference type="GO" id="GO:0005890">
    <property type="term" value="C:sodium:potassium-exchanging ATPase complex"/>
    <property type="evidence" value="ECO:0007669"/>
    <property type="project" value="InterPro"/>
</dbReference>
<dbReference type="GO" id="GO:0006813">
    <property type="term" value="P:potassium ion transport"/>
    <property type="evidence" value="ECO:0007669"/>
    <property type="project" value="InterPro"/>
</dbReference>
<dbReference type="GO" id="GO:1902600">
    <property type="term" value="P:proton transmembrane transport"/>
    <property type="evidence" value="ECO:0007669"/>
    <property type="project" value="UniProtKB-KW"/>
</dbReference>
<dbReference type="GO" id="GO:0006355">
    <property type="term" value="P:regulation of DNA-templated transcription"/>
    <property type="evidence" value="ECO:0000318"/>
    <property type="project" value="GO_Central"/>
</dbReference>
<dbReference type="GO" id="GO:0006814">
    <property type="term" value="P:sodium ion transport"/>
    <property type="evidence" value="ECO:0007669"/>
    <property type="project" value="InterPro"/>
</dbReference>
<dbReference type="FunFam" id="2.60.40.1660:FF:000001">
    <property type="entry name" value="Sodium/potassium-transporting ATPase subunit beta"/>
    <property type="match status" value="1"/>
</dbReference>
<dbReference type="Gene3D" id="1.20.5.170">
    <property type="match status" value="1"/>
</dbReference>
<dbReference type="Gene3D" id="2.60.40.1660">
    <property type="entry name" value="Na, k-atpase alpha subunit"/>
    <property type="match status" value="1"/>
</dbReference>
<dbReference type="InterPro" id="IPR000402">
    <property type="entry name" value="Na/K_ATPase_sub_beta"/>
</dbReference>
<dbReference type="InterPro" id="IPR038702">
    <property type="entry name" value="Na/K_ATPase_sub_beta_sf"/>
</dbReference>
<dbReference type="NCBIfam" id="TIGR01107">
    <property type="entry name" value="Na_K_ATPase_bet"/>
    <property type="match status" value="1"/>
</dbReference>
<dbReference type="PANTHER" id="PTHR11523:SF12">
    <property type="entry name" value="PROTEIN ATP1B4"/>
    <property type="match status" value="1"/>
</dbReference>
<dbReference type="PANTHER" id="PTHR11523">
    <property type="entry name" value="SODIUM/POTASSIUM-DEPENDENT ATPASE BETA SUBUNIT"/>
    <property type="match status" value="1"/>
</dbReference>
<dbReference type="Pfam" id="PF00287">
    <property type="entry name" value="Na_K-ATPase"/>
    <property type="match status" value="1"/>
</dbReference>
<dbReference type="PROSITE" id="PS00391">
    <property type="entry name" value="ATPASE_NA_K_BETA_2"/>
    <property type="match status" value="1"/>
</dbReference>
<sequence>MATTAGEQANYLQSADSMSDGRQHHPEEAGEKKQEEQKKSWGEWLQDLKIFIWNPEKKEVLGRDKKSWALILLFYFILYCFLAGLFALCIYGLLATISPYVPTYRDRVFPPGLTIRPQFNALYFSFNPSDRSTWSSHAESLNTFLEDYNDEIQQEKNLECTPGKYFFQPGEDHEERKACQFRRSLLKNCSGIEDPTFGFAQGKPCILLKMNRIVGYQAGSGIPIYVTCEILKADASYLGPVNFYPSDKFDLMYYPYYGKLTHVNYTSPLIAMQFTEVKNNQDINIQCKINGKDIISDHDKDRFLGRVAFTLHIG</sequence>
<comment type="function">
    <text evidence="4">This is the non-catalytic component of the active enzyme, which catalyzes the hydrolysis of ATP coupled with the exchange of Na(+) and K(+) ions across the plasma membrane.</text>
</comment>
<comment type="subunit">
    <text evidence="4">Composed of two subunits: alpha (catalytic) and beta (accessory).</text>
</comment>
<comment type="subcellular location">
    <subcellularLocation>
        <location evidence="5">Membrane</location>
        <topology evidence="5">Single-pass type II membrane protein</topology>
    </subcellularLocation>
</comment>
<comment type="tissue specificity">
    <text evidence="4">Expressed in skeletal muscle, liver, lung, kidney, heart, brain and skin.</text>
</comment>
<comment type="PTM">
    <text evidence="4">Glycosylated.</text>
</comment>
<comment type="miscellaneous">
    <text>Its function as a Na,K-ATPase beta-subunit will be lost in placental mammals.</text>
</comment>
<comment type="similarity">
    <text evidence="5">Belongs to the X(+)/potassium ATPases subunit beta family.</text>
</comment>
<keyword id="KW-1015">Disulfide bond</keyword>
<keyword id="KW-0325">Glycoprotein</keyword>
<keyword id="KW-0375">Hydrogen ion transport</keyword>
<keyword id="KW-0406">Ion transport</keyword>
<keyword id="KW-0472">Membrane</keyword>
<keyword id="KW-1185">Reference proteome</keyword>
<keyword id="KW-0735">Signal-anchor</keyword>
<keyword id="KW-0812">Transmembrane</keyword>
<keyword id="KW-1133">Transmembrane helix</keyword>
<keyword id="KW-0813">Transport</keyword>
<reference key="1">
    <citation type="journal article" date="2007" name="Proc. Natl. Acad. Sci. U.S.A.">
        <title>Evolution of Na,K-ATPase betam-subunit into a coregulator of transcription in placental mammals.</title>
        <authorList>
            <person name="Pestov N.B."/>
            <person name="Ahmad N."/>
            <person name="Korneenko T.V."/>
            <person name="Zhao H."/>
            <person name="Radkov R."/>
            <person name="Schaer D."/>
            <person name="Roy S."/>
            <person name="Bibert S."/>
            <person name="Geering K."/>
            <person name="Modyanov N.N."/>
        </authorList>
    </citation>
    <scope>NUCLEOTIDE SEQUENCE [MRNA]</scope>
    <scope>FUNCTION</scope>
    <scope>SUBUNIT</scope>
    <scope>GLYCOSYLATION</scope>
    <scope>TISSUE SPECIFICITY</scope>
</reference>
<reference key="2">
    <citation type="submission" date="2008-11" db="EMBL/GenBank/DDBJ databases">
        <authorList>
            <consortium name="NIH - Xenopus Gene Collection (XGC) project"/>
        </authorList>
    </citation>
    <scope>NUCLEOTIDE SEQUENCE [LARGE SCALE MRNA]</scope>
    <source>
        <tissue>Oocyte</tissue>
    </source>
</reference>